<accession>A1U8S3</accession>
<name>RECF_MYCSK</name>
<gene>
    <name evidence="1" type="primary">recF</name>
    <name type="ordered locus">Mkms_0012</name>
</gene>
<comment type="function">
    <text evidence="1">The RecF protein is involved in DNA metabolism; it is required for DNA replication and normal SOS inducibility. RecF binds preferentially to single-stranded, linear DNA. It also seems to bind ATP.</text>
</comment>
<comment type="subcellular location">
    <subcellularLocation>
        <location evidence="1">Cytoplasm</location>
    </subcellularLocation>
</comment>
<comment type="similarity">
    <text evidence="1">Belongs to the RecF family.</text>
</comment>
<sequence>MFVRHLTLTDFRSWARADLELEPGRTVFVGPNGFGKTNLVEALWYSATLGSHRVASDAPLIRVGAPRAVVSTIVVNEGRELAVDLEITTGRANKARLNRSPVRSPREVLGVLRAVLFAPEDLALVRGDPGERRRYLDELATTRRPSIAGVRADYDRVIRQRTALLKSAAGARYRGDRSVLETLDVWDGHLAAHGALLMAARADLVHHLAPEVEKAYQLLAPGSRPAAIRYRTSIDAEDDVSAEYYEAALLDAMTRRRDAELERGVCLVGPHRDDLELRLGDQMAKGYASHGESWSMALSLRLAAYELLRTDGSDPVLLLDDVFAELDAARRRALAEVAASAEQVLVTAAVAEDIPADWDARRIMIRMQDDDDGRVSMVES</sequence>
<reference key="1">
    <citation type="submission" date="2006-12" db="EMBL/GenBank/DDBJ databases">
        <title>Complete sequence of chromosome of Mycobacterium sp. KMS.</title>
        <authorList>
            <consortium name="US DOE Joint Genome Institute"/>
            <person name="Copeland A."/>
            <person name="Lucas S."/>
            <person name="Lapidus A."/>
            <person name="Barry K."/>
            <person name="Detter J.C."/>
            <person name="Glavina del Rio T."/>
            <person name="Hammon N."/>
            <person name="Israni S."/>
            <person name="Dalin E."/>
            <person name="Tice H."/>
            <person name="Pitluck S."/>
            <person name="Kiss H."/>
            <person name="Brettin T."/>
            <person name="Bruce D."/>
            <person name="Han C."/>
            <person name="Tapia R."/>
            <person name="Gilna P."/>
            <person name="Schmutz J."/>
            <person name="Larimer F."/>
            <person name="Land M."/>
            <person name="Hauser L."/>
            <person name="Kyrpides N."/>
            <person name="Mikhailova N."/>
            <person name="Miller C.D."/>
            <person name="Richardson P."/>
        </authorList>
    </citation>
    <scope>NUCLEOTIDE SEQUENCE [LARGE SCALE GENOMIC DNA]</scope>
    <source>
        <strain>KMS</strain>
    </source>
</reference>
<dbReference type="EMBL" id="CP000518">
    <property type="protein sequence ID" value="ABL89231.1"/>
    <property type="molecule type" value="Genomic_DNA"/>
</dbReference>
<dbReference type="SMR" id="A1U8S3"/>
<dbReference type="STRING" id="189918.Mkms_0012"/>
<dbReference type="KEGG" id="mkm:Mkms_0012"/>
<dbReference type="HOGENOM" id="CLU_040267_1_1_11"/>
<dbReference type="OrthoDB" id="9803889at2"/>
<dbReference type="GO" id="GO:0005737">
    <property type="term" value="C:cytoplasm"/>
    <property type="evidence" value="ECO:0007669"/>
    <property type="project" value="UniProtKB-SubCell"/>
</dbReference>
<dbReference type="GO" id="GO:0005524">
    <property type="term" value="F:ATP binding"/>
    <property type="evidence" value="ECO:0007669"/>
    <property type="project" value="UniProtKB-UniRule"/>
</dbReference>
<dbReference type="GO" id="GO:0003697">
    <property type="term" value="F:single-stranded DNA binding"/>
    <property type="evidence" value="ECO:0007669"/>
    <property type="project" value="UniProtKB-UniRule"/>
</dbReference>
<dbReference type="GO" id="GO:0006260">
    <property type="term" value="P:DNA replication"/>
    <property type="evidence" value="ECO:0007669"/>
    <property type="project" value="UniProtKB-UniRule"/>
</dbReference>
<dbReference type="GO" id="GO:0000731">
    <property type="term" value="P:DNA synthesis involved in DNA repair"/>
    <property type="evidence" value="ECO:0007669"/>
    <property type="project" value="TreeGrafter"/>
</dbReference>
<dbReference type="GO" id="GO:0006302">
    <property type="term" value="P:double-strand break repair"/>
    <property type="evidence" value="ECO:0007669"/>
    <property type="project" value="TreeGrafter"/>
</dbReference>
<dbReference type="GO" id="GO:0009432">
    <property type="term" value="P:SOS response"/>
    <property type="evidence" value="ECO:0007669"/>
    <property type="project" value="UniProtKB-UniRule"/>
</dbReference>
<dbReference type="CDD" id="cd03242">
    <property type="entry name" value="ABC_RecF"/>
    <property type="match status" value="1"/>
</dbReference>
<dbReference type="Gene3D" id="3.40.50.300">
    <property type="entry name" value="P-loop containing nucleotide triphosphate hydrolases"/>
    <property type="match status" value="1"/>
</dbReference>
<dbReference type="Gene3D" id="1.20.1050.90">
    <property type="entry name" value="RecF/RecN/SMC, N-terminal domain"/>
    <property type="match status" value="1"/>
</dbReference>
<dbReference type="HAMAP" id="MF_00365">
    <property type="entry name" value="RecF"/>
    <property type="match status" value="1"/>
</dbReference>
<dbReference type="InterPro" id="IPR001238">
    <property type="entry name" value="DNA-binding_RecF"/>
</dbReference>
<dbReference type="InterPro" id="IPR018078">
    <property type="entry name" value="DNA-binding_RecF_CS"/>
</dbReference>
<dbReference type="InterPro" id="IPR027417">
    <property type="entry name" value="P-loop_NTPase"/>
</dbReference>
<dbReference type="InterPro" id="IPR003395">
    <property type="entry name" value="RecF/RecN/SMC_N"/>
</dbReference>
<dbReference type="InterPro" id="IPR042174">
    <property type="entry name" value="RecF_2"/>
</dbReference>
<dbReference type="NCBIfam" id="TIGR00611">
    <property type="entry name" value="recf"/>
    <property type="match status" value="1"/>
</dbReference>
<dbReference type="PANTHER" id="PTHR32182">
    <property type="entry name" value="DNA REPLICATION AND REPAIR PROTEIN RECF"/>
    <property type="match status" value="1"/>
</dbReference>
<dbReference type="PANTHER" id="PTHR32182:SF0">
    <property type="entry name" value="DNA REPLICATION AND REPAIR PROTEIN RECF"/>
    <property type="match status" value="1"/>
</dbReference>
<dbReference type="Pfam" id="PF02463">
    <property type="entry name" value="SMC_N"/>
    <property type="match status" value="1"/>
</dbReference>
<dbReference type="SUPFAM" id="SSF52540">
    <property type="entry name" value="P-loop containing nucleoside triphosphate hydrolases"/>
    <property type="match status" value="1"/>
</dbReference>
<dbReference type="PROSITE" id="PS00617">
    <property type="entry name" value="RECF_1"/>
    <property type="match status" value="1"/>
</dbReference>
<dbReference type="PROSITE" id="PS00618">
    <property type="entry name" value="RECF_2"/>
    <property type="match status" value="1"/>
</dbReference>
<organism>
    <name type="scientific">Mycobacterium sp. (strain KMS)</name>
    <dbReference type="NCBI Taxonomy" id="189918"/>
    <lineage>
        <taxon>Bacteria</taxon>
        <taxon>Bacillati</taxon>
        <taxon>Actinomycetota</taxon>
        <taxon>Actinomycetes</taxon>
        <taxon>Mycobacteriales</taxon>
        <taxon>Mycobacteriaceae</taxon>
        <taxon>Mycobacterium</taxon>
    </lineage>
</organism>
<proteinExistence type="inferred from homology"/>
<keyword id="KW-0067">ATP-binding</keyword>
<keyword id="KW-0963">Cytoplasm</keyword>
<keyword id="KW-0227">DNA damage</keyword>
<keyword id="KW-0234">DNA repair</keyword>
<keyword id="KW-0235">DNA replication</keyword>
<keyword id="KW-0238">DNA-binding</keyword>
<keyword id="KW-0547">Nucleotide-binding</keyword>
<keyword id="KW-0742">SOS response</keyword>
<evidence type="ECO:0000255" key="1">
    <source>
        <dbReference type="HAMAP-Rule" id="MF_00365"/>
    </source>
</evidence>
<protein>
    <recommendedName>
        <fullName evidence="1">DNA replication and repair protein RecF</fullName>
    </recommendedName>
</protein>
<feature type="chain" id="PRO_1000048544" description="DNA replication and repair protein RecF">
    <location>
        <begin position="1"/>
        <end position="380"/>
    </location>
</feature>
<feature type="binding site" evidence="1">
    <location>
        <begin position="30"/>
        <end position="37"/>
    </location>
    <ligand>
        <name>ATP</name>
        <dbReference type="ChEBI" id="CHEBI:30616"/>
    </ligand>
</feature>